<sequence>MKTYVPKQVEPRWVLIDAEGKTLGRLATKIATLLRGKHRPDWTPNVAMGDFVVVVNADKIRVTGKKLEQKIYTRYSGYPGGLKKIPLEKMLATHPERVLEHAVKGMLPKGPLGRRLFKRLKVYAGPDHPHQAQRPEKLEV</sequence>
<protein>
    <recommendedName>
        <fullName evidence="1">Large ribosomal subunit protein uL13</fullName>
    </recommendedName>
    <alternativeName>
        <fullName evidence="3">50S ribosomal protein L13</fullName>
    </alternativeName>
</protein>
<dbReference type="EMBL" id="AP008226">
    <property type="protein sequence ID" value="BAD71288.1"/>
    <property type="molecule type" value="Genomic_DNA"/>
</dbReference>
<dbReference type="RefSeq" id="WP_011173515.1">
    <property type="nucleotide sequence ID" value="NC_006461.1"/>
</dbReference>
<dbReference type="RefSeq" id="YP_144731.1">
    <property type="nucleotide sequence ID" value="NC_006461.1"/>
</dbReference>
<dbReference type="PDB" id="1VVJ">
    <property type="method" value="X-ray"/>
    <property type="resolution" value="3.44 A"/>
    <property type="chains" value="RN/YN=1-140"/>
</dbReference>
<dbReference type="PDB" id="1VY4">
    <property type="method" value="X-ray"/>
    <property type="resolution" value="2.60 A"/>
    <property type="chains" value="BN/DN=1-140"/>
</dbReference>
<dbReference type="PDB" id="1VY5">
    <property type="method" value="X-ray"/>
    <property type="resolution" value="2.55 A"/>
    <property type="chains" value="BN/DN=1-140"/>
</dbReference>
<dbReference type="PDB" id="1VY6">
    <property type="method" value="X-ray"/>
    <property type="resolution" value="2.90 A"/>
    <property type="chains" value="BN/DN=1-140"/>
</dbReference>
<dbReference type="PDB" id="1VY7">
    <property type="method" value="X-ray"/>
    <property type="resolution" value="2.80 A"/>
    <property type="chains" value="BN/DN=1-140"/>
</dbReference>
<dbReference type="PDB" id="4L47">
    <property type="method" value="X-ray"/>
    <property type="resolution" value="3.22 A"/>
    <property type="chains" value="RN/YN=1-140"/>
</dbReference>
<dbReference type="PDB" id="4L71">
    <property type="method" value="X-ray"/>
    <property type="resolution" value="3.90 A"/>
    <property type="chains" value="RN/YN=1-140"/>
</dbReference>
<dbReference type="PDB" id="4LEL">
    <property type="method" value="X-ray"/>
    <property type="resolution" value="3.90 A"/>
    <property type="chains" value="RN/YN=1-140"/>
</dbReference>
<dbReference type="PDB" id="4LFZ">
    <property type="method" value="X-ray"/>
    <property type="resolution" value="3.92 A"/>
    <property type="chains" value="RN/YN=1-140"/>
</dbReference>
<dbReference type="PDB" id="4LNT">
    <property type="method" value="X-ray"/>
    <property type="resolution" value="2.94 A"/>
    <property type="chains" value="RN/YN=1-140"/>
</dbReference>
<dbReference type="PDB" id="4LSK">
    <property type="method" value="X-ray"/>
    <property type="resolution" value="3.48 A"/>
    <property type="chains" value="RN/YN=1-140"/>
</dbReference>
<dbReference type="PDB" id="4LT8">
    <property type="method" value="X-ray"/>
    <property type="resolution" value="3.14 A"/>
    <property type="chains" value="RN/YN=1-140"/>
</dbReference>
<dbReference type="PDB" id="4P6F">
    <property type="method" value="X-ray"/>
    <property type="resolution" value="3.60 A"/>
    <property type="chains" value="RN/YN=1-140"/>
</dbReference>
<dbReference type="PDB" id="4P70">
    <property type="method" value="X-ray"/>
    <property type="resolution" value="3.68 A"/>
    <property type="chains" value="RN/YN=1-140"/>
</dbReference>
<dbReference type="PDB" id="4TUA">
    <property type="method" value="X-ray"/>
    <property type="resolution" value="3.60 A"/>
    <property type="chains" value="RN/YN=1-140"/>
</dbReference>
<dbReference type="PDB" id="4TUB">
    <property type="method" value="X-ray"/>
    <property type="resolution" value="3.60 A"/>
    <property type="chains" value="RN/YN=1-140"/>
</dbReference>
<dbReference type="PDB" id="4TUC">
    <property type="method" value="X-ray"/>
    <property type="resolution" value="3.60 A"/>
    <property type="chains" value="RN/YN=1-140"/>
</dbReference>
<dbReference type="PDB" id="4TUD">
    <property type="method" value="X-ray"/>
    <property type="resolution" value="3.60 A"/>
    <property type="chains" value="RN/YN=1-140"/>
</dbReference>
<dbReference type="PDB" id="4TUE">
    <property type="method" value="X-ray"/>
    <property type="resolution" value="3.50 A"/>
    <property type="chains" value="RN/YN=1-140"/>
</dbReference>
<dbReference type="PDB" id="4V42">
    <property type="method" value="X-ray"/>
    <property type="resolution" value="5.50 A"/>
    <property type="chains" value="BM=1-140"/>
</dbReference>
<dbReference type="PDB" id="4V4P">
    <property type="method" value="X-ray"/>
    <property type="resolution" value="5.50 A"/>
    <property type="chains" value="M=1-140"/>
</dbReference>
<dbReference type="PDB" id="4V4T">
    <property type="method" value="X-ray"/>
    <property type="resolution" value="6.46 A"/>
    <property type="chains" value="N=1-140"/>
</dbReference>
<dbReference type="PDB" id="4V4X">
    <property type="method" value="X-ray"/>
    <property type="resolution" value="5.00 A"/>
    <property type="chains" value="BM=1-140"/>
</dbReference>
<dbReference type="PDB" id="4V4Y">
    <property type="method" value="X-ray"/>
    <property type="resolution" value="5.50 A"/>
    <property type="chains" value="BM=1-140"/>
</dbReference>
<dbReference type="PDB" id="4V4Z">
    <property type="method" value="X-ray"/>
    <property type="resolution" value="4.51 A"/>
    <property type="chains" value="BM=1-140"/>
</dbReference>
<dbReference type="PDB" id="4V51">
    <property type="method" value="X-ray"/>
    <property type="resolution" value="2.80 A"/>
    <property type="chains" value="BN/DN=1-140"/>
</dbReference>
<dbReference type="PDB" id="4V5A">
    <property type="method" value="X-ray"/>
    <property type="resolution" value="3.50 A"/>
    <property type="chains" value="BN/DN=1-140"/>
</dbReference>
<dbReference type="PDB" id="4V5C">
    <property type="method" value="X-ray"/>
    <property type="resolution" value="3.30 A"/>
    <property type="chains" value="BN/DN=1-140"/>
</dbReference>
<dbReference type="PDB" id="4V5D">
    <property type="method" value="X-ray"/>
    <property type="resolution" value="3.50 A"/>
    <property type="chains" value="BN/DN=1-140"/>
</dbReference>
<dbReference type="PDB" id="4V5E">
    <property type="method" value="X-ray"/>
    <property type="resolution" value="3.45 A"/>
    <property type="chains" value="BN/DN=1-140"/>
</dbReference>
<dbReference type="PDB" id="4V5F">
    <property type="method" value="X-ray"/>
    <property type="resolution" value="3.60 A"/>
    <property type="chains" value="BN/DN=1-140"/>
</dbReference>
<dbReference type="PDB" id="4V5G">
    <property type="method" value="X-ray"/>
    <property type="resolution" value="3.60 A"/>
    <property type="chains" value="BN/DN=1-140"/>
</dbReference>
<dbReference type="PDB" id="4V5J">
    <property type="method" value="X-ray"/>
    <property type="resolution" value="3.10 A"/>
    <property type="chains" value="BN/DN=1-140"/>
</dbReference>
<dbReference type="PDB" id="4V5K">
    <property type="method" value="X-ray"/>
    <property type="resolution" value="3.20 A"/>
    <property type="chains" value="BN/DN=1-140"/>
</dbReference>
<dbReference type="PDB" id="4V5L">
    <property type="method" value="X-ray"/>
    <property type="resolution" value="3.10 A"/>
    <property type="chains" value="BN=1-140"/>
</dbReference>
<dbReference type="PDB" id="4V5M">
    <property type="method" value="EM"/>
    <property type="resolution" value="7.80 A"/>
    <property type="chains" value="BN=1-140"/>
</dbReference>
<dbReference type="PDB" id="4V5N">
    <property type="method" value="EM"/>
    <property type="resolution" value="7.60 A"/>
    <property type="chains" value="BN=1-140"/>
</dbReference>
<dbReference type="PDB" id="4V5P">
    <property type="method" value="X-ray"/>
    <property type="resolution" value="3.10 A"/>
    <property type="chains" value="BN/DN=1-140"/>
</dbReference>
<dbReference type="PDB" id="4V5Q">
    <property type="method" value="X-ray"/>
    <property type="resolution" value="3.10 A"/>
    <property type="chains" value="BN/DN=1-140"/>
</dbReference>
<dbReference type="PDB" id="4V5R">
    <property type="method" value="X-ray"/>
    <property type="resolution" value="3.10 A"/>
    <property type="chains" value="BN/DN=1-140"/>
</dbReference>
<dbReference type="PDB" id="4V5S">
    <property type="method" value="X-ray"/>
    <property type="resolution" value="3.10 A"/>
    <property type="chains" value="BN/DN=1-140"/>
</dbReference>
<dbReference type="PDB" id="4V68">
    <property type="method" value="EM"/>
    <property type="resolution" value="6.40 A"/>
    <property type="chains" value="BN=1-139"/>
</dbReference>
<dbReference type="PDB" id="4V6A">
    <property type="method" value="X-ray"/>
    <property type="resolution" value="3.10 A"/>
    <property type="chains" value="BN/DN=1-140"/>
</dbReference>
<dbReference type="PDB" id="4V6F">
    <property type="method" value="X-ray"/>
    <property type="resolution" value="3.10 A"/>
    <property type="chains" value="AM/DM=1-140"/>
</dbReference>
<dbReference type="PDB" id="4V6G">
    <property type="method" value="X-ray"/>
    <property type="resolution" value="3.50 A"/>
    <property type="chains" value="BM/DM=1-140"/>
</dbReference>
<dbReference type="PDB" id="4V7J">
    <property type="method" value="X-ray"/>
    <property type="resolution" value="3.30 A"/>
    <property type="chains" value="AN/BN=1-140"/>
</dbReference>
<dbReference type="PDB" id="4V7K">
    <property type="method" value="X-ray"/>
    <property type="resolution" value="3.60 A"/>
    <property type="chains" value="AN/BN=1-140"/>
</dbReference>
<dbReference type="PDB" id="4V7L">
    <property type="method" value="X-ray"/>
    <property type="resolution" value="3.00 A"/>
    <property type="chains" value="BN/DN=1-140"/>
</dbReference>
<dbReference type="PDB" id="4V7M">
    <property type="method" value="X-ray"/>
    <property type="resolution" value="3.45 A"/>
    <property type="chains" value="BN/DN=1-140"/>
</dbReference>
<dbReference type="PDB" id="4V7W">
    <property type="method" value="X-ray"/>
    <property type="resolution" value="3.00 A"/>
    <property type="chains" value="BN/DN=1-140"/>
</dbReference>
<dbReference type="PDB" id="4V7X">
    <property type="method" value="X-ray"/>
    <property type="resolution" value="3.00 A"/>
    <property type="chains" value="BN/DN=1-140"/>
</dbReference>
<dbReference type="PDB" id="4V7Y">
    <property type="method" value="X-ray"/>
    <property type="resolution" value="3.00 A"/>
    <property type="chains" value="BN/DN=1-140"/>
</dbReference>
<dbReference type="PDB" id="4V7Z">
    <property type="method" value="X-ray"/>
    <property type="resolution" value="3.10 A"/>
    <property type="chains" value="BN/DN=1-140"/>
</dbReference>
<dbReference type="PDB" id="4V87">
    <property type="method" value="X-ray"/>
    <property type="resolution" value="3.10 A"/>
    <property type="chains" value="AM/DM=1-138"/>
</dbReference>
<dbReference type="PDB" id="4V8A">
    <property type="method" value="X-ray"/>
    <property type="resolution" value="3.20 A"/>
    <property type="chains" value="AN/BN=1-140"/>
</dbReference>
<dbReference type="PDB" id="4V8B">
    <property type="method" value="X-ray"/>
    <property type="resolution" value="3.00 A"/>
    <property type="chains" value="BM/DM=1-140"/>
</dbReference>
<dbReference type="PDB" id="4V8C">
    <property type="method" value="X-ray"/>
    <property type="resolution" value="3.30 A"/>
    <property type="chains" value="AM/BM=1-140"/>
</dbReference>
<dbReference type="PDB" id="4V8D">
    <property type="method" value="X-ray"/>
    <property type="resolution" value="3.00 A"/>
    <property type="chains" value="BM/DM=1-140"/>
</dbReference>
<dbReference type="PDB" id="4V8E">
    <property type="method" value="X-ray"/>
    <property type="resolution" value="3.30 A"/>
    <property type="chains" value="AM/CM=1-140"/>
</dbReference>
<dbReference type="PDB" id="4V8F">
    <property type="method" value="X-ray"/>
    <property type="resolution" value="3.30 A"/>
    <property type="chains" value="AM/DM=1-140"/>
</dbReference>
<dbReference type="PDB" id="4V8G">
    <property type="method" value="X-ray"/>
    <property type="resolution" value="3.00 A"/>
    <property type="chains" value="BN/DN=1-140"/>
</dbReference>
<dbReference type="PDB" id="4V8H">
    <property type="method" value="X-ray"/>
    <property type="resolution" value="3.10 A"/>
    <property type="chains" value="BN/DN=1-140"/>
</dbReference>
<dbReference type="PDB" id="4V8I">
    <property type="method" value="X-ray"/>
    <property type="resolution" value="2.70 A"/>
    <property type="chains" value="BN/DN=1-140"/>
</dbReference>
<dbReference type="PDB" id="4V8J">
    <property type="method" value="X-ray"/>
    <property type="resolution" value="3.90 A"/>
    <property type="chains" value="BN/DN=1-140"/>
</dbReference>
<dbReference type="PDB" id="4V8N">
    <property type="method" value="X-ray"/>
    <property type="resolution" value="3.10 A"/>
    <property type="chains" value="BN/DN=1-140"/>
</dbReference>
<dbReference type="PDB" id="4V8O">
    <property type="method" value="X-ray"/>
    <property type="resolution" value="3.80 A"/>
    <property type="chains" value="BN=1-140"/>
</dbReference>
<dbReference type="PDB" id="4V8Q">
    <property type="method" value="X-ray"/>
    <property type="resolution" value="3.10 A"/>
    <property type="chains" value="AN=1-140"/>
</dbReference>
<dbReference type="PDB" id="4V8U">
    <property type="method" value="X-ray"/>
    <property type="resolution" value="3.70 A"/>
    <property type="chains" value="BN/DN=1-140"/>
</dbReference>
<dbReference type="PDB" id="4V8X">
    <property type="method" value="X-ray"/>
    <property type="resolution" value="3.35 A"/>
    <property type="chains" value="BN/DN=1-140"/>
</dbReference>
<dbReference type="PDB" id="4V90">
    <property type="method" value="X-ray"/>
    <property type="resolution" value="2.95 A"/>
    <property type="chains" value="BN=1-140"/>
</dbReference>
<dbReference type="PDB" id="4V95">
    <property type="method" value="X-ray"/>
    <property type="resolution" value="3.20 A"/>
    <property type="chains" value="BN/DN=1-140"/>
</dbReference>
<dbReference type="PDB" id="4V97">
    <property type="method" value="X-ray"/>
    <property type="resolution" value="3.52 A"/>
    <property type="chains" value="BN/DN=1-140"/>
</dbReference>
<dbReference type="PDB" id="4V9A">
    <property type="method" value="X-ray"/>
    <property type="resolution" value="3.30 A"/>
    <property type="chains" value="BM/DM=1-140"/>
</dbReference>
<dbReference type="PDB" id="4V9B">
    <property type="method" value="X-ray"/>
    <property type="resolution" value="3.10 A"/>
    <property type="chains" value="BM/DM=1-140"/>
</dbReference>
<dbReference type="PDB" id="4V9H">
    <property type="method" value="X-ray"/>
    <property type="resolution" value="2.86 A"/>
    <property type="chains" value="BN=1-140"/>
</dbReference>
<dbReference type="PDB" id="4V9I">
    <property type="method" value="X-ray"/>
    <property type="resolution" value="3.30 A"/>
    <property type="chains" value="BN/DN=1-138"/>
</dbReference>
<dbReference type="PDB" id="4V9R">
    <property type="method" value="X-ray"/>
    <property type="resolution" value="3.00 A"/>
    <property type="chains" value="BN/DN=1-140"/>
</dbReference>
<dbReference type="PDB" id="4V9S">
    <property type="method" value="X-ray"/>
    <property type="resolution" value="3.10 A"/>
    <property type="chains" value="BN/DN=1-140"/>
</dbReference>
<dbReference type="PDB" id="4W2E">
    <property type="method" value="X-ray"/>
    <property type="resolution" value="2.90 A"/>
    <property type="chains" value="N=1-140"/>
</dbReference>
<dbReference type="PDB" id="4W2F">
    <property type="method" value="X-ray"/>
    <property type="resolution" value="2.40 A"/>
    <property type="chains" value="BN/DN=1-140"/>
</dbReference>
<dbReference type="PDB" id="4W2G">
    <property type="method" value="X-ray"/>
    <property type="resolution" value="2.55 A"/>
    <property type="chains" value="BN/DN=1-140"/>
</dbReference>
<dbReference type="PDB" id="4W2H">
    <property type="method" value="X-ray"/>
    <property type="resolution" value="2.70 A"/>
    <property type="chains" value="BN/DN=1-140"/>
</dbReference>
<dbReference type="PDB" id="4W2I">
    <property type="method" value="X-ray"/>
    <property type="resolution" value="2.70 A"/>
    <property type="chains" value="BN/DN=1-140"/>
</dbReference>
<dbReference type="PDB" id="4W4G">
    <property type="method" value="X-ray"/>
    <property type="resolution" value="3.30 A"/>
    <property type="chains" value="RN/YN=1-140"/>
</dbReference>
<dbReference type="PDB" id="4WPO">
    <property type="method" value="X-ray"/>
    <property type="resolution" value="2.80 A"/>
    <property type="chains" value="AN/CN=1-140"/>
</dbReference>
<dbReference type="PDB" id="4WQ1">
    <property type="method" value="X-ray"/>
    <property type="resolution" value="3.10 A"/>
    <property type="chains" value="15/58=1-138"/>
</dbReference>
<dbReference type="PDB" id="4WQF">
    <property type="method" value="X-ray"/>
    <property type="resolution" value="2.80 A"/>
    <property type="chains" value="AN/CN=1-140"/>
</dbReference>
<dbReference type="PDB" id="4WQR">
    <property type="method" value="X-ray"/>
    <property type="resolution" value="3.15 A"/>
    <property type="chains" value="15/58=1-140"/>
</dbReference>
<dbReference type="PDB" id="4WQU">
    <property type="method" value="X-ray"/>
    <property type="resolution" value="2.80 A"/>
    <property type="chains" value="AN/CN=1-140"/>
</dbReference>
<dbReference type="PDB" id="4WQY">
    <property type="method" value="X-ray"/>
    <property type="resolution" value="2.80 A"/>
    <property type="chains" value="AN/CN=1-140"/>
</dbReference>
<dbReference type="PDB" id="4WR6">
    <property type="method" value="X-ray"/>
    <property type="resolution" value="3.05 A"/>
    <property type="chains" value="15/58=1-140"/>
</dbReference>
<dbReference type="PDB" id="4WRA">
    <property type="method" value="X-ray"/>
    <property type="resolution" value="3.05 A"/>
    <property type="chains" value="15/58=1-140"/>
</dbReference>
<dbReference type="PDB" id="4WRO">
    <property type="method" value="X-ray"/>
    <property type="resolution" value="3.05 A"/>
    <property type="chains" value="58=1-140"/>
</dbReference>
<dbReference type="PDB" id="4WSD">
    <property type="method" value="X-ray"/>
    <property type="resolution" value="2.95 A"/>
    <property type="chains" value="15/58=1-140"/>
</dbReference>
<dbReference type="PDB" id="4WSM">
    <property type="method" value="X-ray"/>
    <property type="resolution" value="3.30 A"/>
    <property type="chains" value="15/58=1-140"/>
</dbReference>
<dbReference type="PDB" id="4WT1">
    <property type="method" value="X-ray"/>
    <property type="resolution" value="3.05 A"/>
    <property type="chains" value="15/58=1-140"/>
</dbReference>
<dbReference type="PDB" id="4WT8">
    <property type="method" value="X-ray"/>
    <property type="resolution" value="3.40 A"/>
    <property type="chains" value="CM/DM=1-138"/>
</dbReference>
<dbReference type="PDB" id="4WU1">
    <property type="method" value="X-ray"/>
    <property type="resolution" value="3.20 A"/>
    <property type="chains" value="15/58=1-140"/>
</dbReference>
<dbReference type="PDB" id="4WZD">
    <property type="method" value="X-ray"/>
    <property type="resolution" value="3.10 A"/>
    <property type="chains" value="15/58=1-140"/>
</dbReference>
<dbReference type="PDB" id="4WZO">
    <property type="method" value="X-ray"/>
    <property type="resolution" value="3.30 A"/>
    <property type="chains" value="15/58=1-140"/>
</dbReference>
<dbReference type="PDB" id="4Y4O">
    <property type="method" value="X-ray"/>
    <property type="resolution" value="2.30 A"/>
    <property type="chains" value="1N/2N=1-140"/>
</dbReference>
<dbReference type="PDB" id="4Y4P">
    <property type="method" value="X-ray"/>
    <property type="resolution" value="2.50 A"/>
    <property type="chains" value="1N/2N=1-140"/>
</dbReference>
<dbReference type="PDB" id="4YPB">
    <property type="method" value="X-ray"/>
    <property type="resolution" value="3.40 A"/>
    <property type="chains" value="RN/YN=1-140"/>
</dbReference>
<dbReference type="PDB" id="4YZV">
    <property type="method" value="X-ray"/>
    <property type="resolution" value="3.10 A"/>
    <property type="chains" value="RN/YN=1-140"/>
</dbReference>
<dbReference type="PDB" id="4Z3S">
    <property type="method" value="X-ray"/>
    <property type="resolution" value="2.65 A"/>
    <property type="chains" value="1N/2N=1-140"/>
</dbReference>
<dbReference type="PDB" id="4Z8C">
    <property type="method" value="X-ray"/>
    <property type="resolution" value="2.90 A"/>
    <property type="chains" value="1N/2N=1-140"/>
</dbReference>
<dbReference type="PDB" id="4ZER">
    <property type="method" value="X-ray"/>
    <property type="resolution" value="3.10 A"/>
    <property type="chains" value="1N/2N=1-140"/>
</dbReference>
<dbReference type="PDB" id="4ZSN">
    <property type="method" value="X-ray"/>
    <property type="resolution" value="3.60 A"/>
    <property type="chains" value="RN/YN=1-140"/>
</dbReference>
<dbReference type="PDB" id="5A9Z">
    <property type="method" value="EM"/>
    <property type="resolution" value="4.70 A"/>
    <property type="chains" value="AK=2-140"/>
</dbReference>
<dbReference type="PDB" id="5AA0">
    <property type="method" value="EM"/>
    <property type="resolution" value="5.00 A"/>
    <property type="chains" value="AK=2-140"/>
</dbReference>
<dbReference type="PDB" id="5CZP">
    <property type="method" value="X-ray"/>
    <property type="resolution" value="3.30 A"/>
    <property type="chains" value="RN/YN=1-140"/>
</dbReference>
<dbReference type="PDB" id="5D8B">
    <property type="method" value="X-ray"/>
    <property type="resolution" value="3.63 A"/>
    <property type="chains" value="DB/H=1-140"/>
</dbReference>
<dbReference type="PDB" id="5DFE">
    <property type="method" value="X-ray"/>
    <property type="resolution" value="3.10 A"/>
    <property type="chains" value="RN/YN=1-140"/>
</dbReference>
<dbReference type="PDB" id="5DOX">
    <property type="method" value="X-ray"/>
    <property type="resolution" value="3.10 A"/>
    <property type="chains" value="1N/2N=1-140"/>
</dbReference>
<dbReference type="PDB" id="5DOY">
    <property type="method" value="X-ray"/>
    <property type="resolution" value="2.60 A"/>
    <property type="chains" value="1N/2N=1-140"/>
</dbReference>
<dbReference type="PDB" id="5E7K">
    <property type="method" value="X-ray"/>
    <property type="resolution" value="3.20 A"/>
    <property type="chains" value="15/58=1-140"/>
</dbReference>
<dbReference type="PDB" id="5E81">
    <property type="method" value="X-ray"/>
    <property type="resolution" value="2.95 A"/>
    <property type="chains" value="15/58=1-140"/>
</dbReference>
<dbReference type="PDB" id="5EL4">
    <property type="method" value="X-ray"/>
    <property type="resolution" value="3.15 A"/>
    <property type="chains" value="15/58=1-140"/>
</dbReference>
<dbReference type="PDB" id="5EL5">
    <property type="method" value="X-ray"/>
    <property type="resolution" value="3.15 A"/>
    <property type="chains" value="15/58=1-140"/>
</dbReference>
<dbReference type="PDB" id="5EL6">
    <property type="method" value="X-ray"/>
    <property type="resolution" value="3.10 A"/>
    <property type="chains" value="15/58=1-140"/>
</dbReference>
<dbReference type="PDB" id="5EL7">
    <property type="method" value="X-ray"/>
    <property type="resolution" value="3.15 A"/>
    <property type="chains" value="15/58=1-140"/>
</dbReference>
<dbReference type="PDB" id="5F8K">
    <property type="method" value="X-ray"/>
    <property type="resolution" value="2.80 A"/>
    <property type="chains" value="1N/2N=1-140"/>
</dbReference>
<dbReference type="PDB" id="5FDU">
    <property type="method" value="X-ray"/>
    <property type="resolution" value="2.90 A"/>
    <property type="chains" value="1N/2N=1-140"/>
</dbReference>
<dbReference type="PDB" id="5FDV">
    <property type="method" value="X-ray"/>
    <property type="resolution" value="2.80 A"/>
    <property type="chains" value="1N/2N=1-140"/>
</dbReference>
<dbReference type="PDB" id="5HAU">
    <property type="method" value="X-ray"/>
    <property type="resolution" value="3.00 A"/>
    <property type="chains" value="1L/2L=1-140"/>
</dbReference>
<dbReference type="PDB" id="5HCP">
    <property type="method" value="X-ray"/>
    <property type="resolution" value="2.89 A"/>
    <property type="chains" value="1N/2N=1-140"/>
</dbReference>
<dbReference type="PDB" id="5HCQ">
    <property type="method" value="X-ray"/>
    <property type="resolution" value="2.80 A"/>
    <property type="chains" value="1N/2N=1-140"/>
</dbReference>
<dbReference type="PDB" id="5HCR">
    <property type="method" value="X-ray"/>
    <property type="resolution" value="2.80 A"/>
    <property type="chains" value="1N/2N=1-140"/>
</dbReference>
<dbReference type="PDB" id="5HD1">
    <property type="method" value="X-ray"/>
    <property type="resolution" value="2.70 A"/>
    <property type="chains" value="1N/2N=1-140"/>
</dbReference>
<dbReference type="PDB" id="5IB7">
    <property type="method" value="X-ray"/>
    <property type="resolution" value="2.99 A"/>
    <property type="chains" value="15/58=1-140"/>
</dbReference>
<dbReference type="PDB" id="5IB8">
    <property type="method" value="X-ray"/>
    <property type="resolution" value="3.13 A"/>
    <property type="chains" value="15/58=1-140"/>
</dbReference>
<dbReference type="PDB" id="5IBB">
    <property type="method" value="X-ray"/>
    <property type="resolution" value="2.96 A"/>
    <property type="chains" value="15/58=1-140"/>
</dbReference>
<dbReference type="PDB" id="5IMQ">
    <property type="method" value="EM"/>
    <property type="resolution" value="3.80 A"/>
    <property type="chains" value="f=1-140"/>
</dbReference>
<dbReference type="PDB" id="5IMR">
    <property type="method" value="EM"/>
    <property type="chains" value="f=1-140"/>
</dbReference>
<dbReference type="PDB" id="5J30">
    <property type="method" value="X-ray"/>
    <property type="resolution" value="3.20 A"/>
    <property type="chains" value="RN/YN=1-140"/>
</dbReference>
<dbReference type="PDB" id="5J3C">
    <property type="method" value="X-ray"/>
    <property type="resolution" value="3.04 A"/>
    <property type="chains" value="RN/YN=1-140"/>
</dbReference>
<dbReference type="PDB" id="5J4B">
    <property type="method" value="X-ray"/>
    <property type="resolution" value="2.60 A"/>
    <property type="chains" value="1N/2N=1-140"/>
</dbReference>
<dbReference type="PDB" id="5J4C">
    <property type="method" value="X-ray"/>
    <property type="resolution" value="2.80 A"/>
    <property type="chains" value="1N/2N=1-140"/>
</dbReference>
<dbReference type="PDB" id="5J8B">
    <property type="method" value="X-ray"/>
    <property type="resolution" value="2.60 A"/>
    <property type="chains" value="N=1-140"/>
</dbReference>
<dbReference type="PDB" id="5NDJ">
    <property type="method" value="X-ray"/>
    <property type="resolution" value="3.15 A"/>
    <property type="chains" value="15/58=1-140"/>
</dbReference>
<dbReference type="PDB" id="5NDK">
    <property type="method" value="X-ray"/>
    <property type="resolution" value="2.95 A"/>
    <property type="chains" value="15/58=1-140"/>
</dbReference>
<dbReference type="PDB" id="5OT7">
    <property type="method" value="EM"/>
    <property type="resolution" value="3.80 A"/>
    <property type="chains" value="o=1-139"/>
</dbReference>
<dbReference type="PDB" id="5UQ7">
    <property type="method" value="EM"/>
    <property type="resolution" value="3.50 A"/>
    <property type="chains" value="N=1-140"/>
</dbReference>
<dbReference type="PDB" id="5UQ8">
    <property type="method" value="EM"/>
    <property type="resolution" value="3.20 A"/>
    <property type="chains" value="N=1-140"/>
</dbReference>
<dbReference type="PDB" id="5VP2">
    <property type="method" value="X-ray"/>
    <property type="resolution" value="2.80 A"/>
    <property type="chains" value="1N/2N=1-140"/>
</dbReference>
<dbReference type="PDB" id="5VPO">
    <property type="method" value="X-ray"/>
    <property type="resolution" value="3.34 A"/>
    <property type="chains" value="RN/YN=1-140"/>
</dbReference>
<dbReference type="PDB" id="5VPP">
    <property type="method" value="X-ray"/>
    <property type="resolution" value="3.90 A"/>
    <property type="chains" value="RN/YN=1-140"/>
</dbReference>
<dbReference type="PDB" id="5W4K">
    <property type="method" value="X-ray"/>
    <property type="resolution" value="2.70 A"/>
    <property type="chains" value="1N/2N=1-140"/>
</dbReference>
<dbReference type="PDB" id="5WIS">
    <property type="method" value="X-ray"/>
    <property type="resolution" value="2.70 A"/>
    <property type="chains" value="1N/2N=1-140"/>
</dbReference>
<dbReference type="PDB" id="5WIT">
    <property type="method" value="X-ray"/>
    <property type="resolution" value="2.60 A"/>
    <property type="chains" value="1N/2N=1-140"/>
</dbReference>
<dbReference type="PDB" id="5ZLU">
    <property type="method" value="EM"/>
    <property type="resolution" value="3.60 A"/>
    <property type="chains" value="g=1-140"/>
</dbReference>
<dbReference type="PDB" id="6BUW">
    <property type="method" value="X-ray"/>
    <property type="resolution" value="3.50 A"/>
    <property type="chains" value="RN/YN=1-140"/>
</dbReference>
<dbReference type="PDB" id="6BZ6">
    <property type="method" value="X-ray"/>
    <property type="resolution" value="3.18 A"/>
    <property type="chains" value="RN/YN=1-140"/>
</dbReference>
<dbReference type="PDB" id="6BZ7">
    <property type="method" value="X-ray"/>
    <property type="resolution" value="3.68 A"/>
    <property type="chains" value="RN/YN=1-140"/>
</dbReference>
<dbReference type="PDB" id="6BZ8">
    <property type="method" value="X-ray"/>
    <property type="resolution" value="3.74 A"/>
    <property type="chains" value="RN/YN=1-140"/>
</dbReference>
<dbReference type="PDB" id="6C5L">
    <property type="method" value="X-ray"/>
    <property type="resolution" value="3.20 A"/>
    <property type="chains" value="BN/DN=1-140"/>
</dbReference>
<dbReference type="PDB" id="6CAE">
    <property type="method" value="X-ray"/>
    <property type="resolution" value="2.60 A"/>
    <property type="chains" value="1N/2N=1-140"/>
</dbReference>
<dbReference type="PDB" id="6CFJ">
    <property type="method" value="X-ray"/>
    <property type="resolution" value="2.80 A"/>
    <property type="chains" value="1N/2N=1-140"/>
</dbReference>
<dbReference type="PDB" id="6CFK">
    <property type="method" value="X-ray"/>
    <property type="resolution" value="2.70 A"/>
    <property type="chains" value="1N/2N=1-140"/>
</dbReference>
<dbReference type="PDB" id="6CFL">
    <property type="method" value="X-ray"/>
    <property type="resolution" value="2.60 A"/>
    <property type="chains" value="1N/2N=1-140"/>
</dbReference>
<dbReference type="PDB" id="6CZR">
    <property type="method" value="X-ray"/>
    <property type="resolution" value="3.14 A"/>
    <property type="chains" value="1N/2N=1-140"/>
</dbReference>
<dbReference type="PDB" id="6FKR">
    <property type="method" value="X-ray"/>
    <property type="resolution" value="3.20 A"/>
    <property type="chains" value="1N/2N=1-140"/>
</dbReference>
<dbReference type="PDB" id="6GSJ">
    <property type="method" value="X-ray"/>
    <property type="resolution" value="2.96 A"/>
    <property type="chains" value="15/58=1-140"/>
</dbReference>
<dbReference type="PDB" id="6GSK">
    <property type="method" value="X-ray"/>
    <property type="resolution" value="3.36 A"/>
    <property type="chains" value="15/58=1-140"/>
</dbReference>
<dbReference type="PDB" id="6GSL">
    <property type="method" value="X-ray"/>
    <property type="resolution" value="3.16 A"/>
    <property type="chains" value="15/58=1-140"/>
</dbReference>
<dbReference type="PDB" id="6GZQ">
    <property type="method" value="EM"/>
    <property type="resolution" value="3.28 A"/>
    <property type="chains" value="I1=1-138"/>
</dbReference>
<dbReference type="PDB" id="6GZX">
    <property type="method" value="EM"/>
    <property type="resolution" value="4.57 A"/>
    <property type="chains" value="I1/I2=1-138"/>
</dbReference>
<dbReference type="PDB" id="6GZZ">
    <property type="method" value="EM"/>
    <property type="resolution" value="4.13 A"/>
    <property type="chains" value="I1/I2=1-138"/>
</dbReference>
<dbReference type="PDB" id="6N9E">
    <property type="method" value="X-ray"/>
    <property type="resolution" value="3.70 A"/>
    <property type="chains" value="1N/2N=1-140"/>
</dbReference>
<dbReference type="PDB" id="6N9F">
    <property type="method" value="X-ray"/>
    <property type="resolution" value="3.70 A"/>
    <property type="chains" value="1N/2N=1-140"/>
</dbReference>
<dbReference type="PDB" id="6ND5">
    <property type="method" value="X-ray"/>
    <property type="resolution" value="2.60 A"/>
    <property type="chains" value="1N/2N=1-140"/>
</dbReference>
<dbReference type="PDB" id="6ND6">
    <property type="method" value="X-ray"/>
    <property type="resolution" value="2.85 A"/>
    <property type="chains" value="1N/2N=1-140"/>
</dbReference>
<dbReference type="PDB" id="6NDK">
    <property type="method" value="X-ray"/>
    <property type="resolution" value="3.64 A"/>
    <property type="chains" value="RN/YN=1-140"/>
</dbReference>
<dbReference type="PDB" id="6NSH">
    <property type="method" value="X-ray"/>
    <property type="resolution" value="3.40 A"/>
    <property type="chains" value="RN/YN=1-140"/>
</dbReference>
<dbReference type="PDB" id="6NTA">
    <property type="method" value="X-ray"/>
    <property type="resolution" value="3.10 A"/>
    <property type="chains" value="RN/YN=1-140"/>
</dbReference>
<dbReference type="PDB" id="6NUO">
    <property type="method" value="X-ray"/>
    <property type="resolution" value="3.20 A"/>
    <property type="chains" value="RN/YN=1-140"/>
</dbReference>
<dbReference type="PDB" id="6NWY">
    <property type="method" value="X-ray"/>
    <property type="resolution" value="3.50 A"/>
    <property type="chains" value="RN/YN=1-140"/>
</dbReference>
<dbReference type="PDB" id="6O3M">
    <property type="method" value="X-ray"/>
    <property type="resolution" value="3.97 A"/>
    <property type="chains" value="RN/YN=1-140"/>
</dbReference>
<dbReference type="PDB" id="6O97">
    <property type="method" value="X-ray"/>
    <property type="resolution" value="2.75 A"/>
    <property type="chains" value="1N/2N=1-140"/>
</dbReference>
<dbReference type="PDB" id="6OF1">
    <property type="method" value="X-ray"/>
    <property type="resolution" value="2.80 A"/>
    <property type="chains" value="1N/2N=1-140"/>
</dbReference>
<dbReference type="PDB" id="6OF6">
    <property type="method" value="X-ray"/>
    <property type="resolution" value="3.20 A"/>
    <property type="chains" value="RN/YN=1-140"/>
</dbReference>
<dbReference type="PDB" id="6OJ2">
    <property type="method" value="X-ray"/>
    <property type="resolution" value="3.20 A"/>
    <property type="chains" value="RN/YN=1-140"/>
</dbReference>
<dbReference type="PDB" id="6OPE">
    <property type="method" value="X-ray"/>
    <property type="resolution" value="3.10 A"/>
    <property type="chains" value="RN/YN=1-140"/>
</dbReference>
<dbReference type="PDB" id="6ORD">
    <property type="method" value="X-ray"/>
    <property type="resolution" value="3.10 A"/>
    <property type="chains" value="RN/YN=1-140"/>
</dbReference>
<dbReference type="PDB" id="6OSI">
    <property type="method" value="X-ray"/>
    <property type="resolution" value="4.14 A"/>
    <property type="chains" value="RN/YN=1-140"/>
</dbReference>
<dbReference type="PDB" id="6OTR">
    <property type="method" value="X-ray"/>
    <property type="resolution" value="3.12 A"/>
    <property type="chains" value="RN/YN=1-140"/>
</dbReference>
<dbReference type="PDB" id="6OXA">
    <property type="method" value="X-ray"/>
    <property type="resolution" value="3.25 A"/>
    <property type="chains" value="RN/YN=1-140"/>
</dbReference>
<dbReference type="PDB" id="6OXI">
    <property type="method" value="X-ray"/>
    <property type="resolution" value="3.50 A"/>
    <property type="chains" value="RN/YN=1-140"/>
</dbReference>
<dbReference type="PDB" id="6Q95">
    <property type="method" value="EM"/>
    <property type="resolution" value="3.70 A"/>
    <property type="chains" value="J=1-139"/>
</dbReference>
<dbReference type="PDB" id="6QNQ">
    <property type="method" value="X-ray"/>
    <property type="resolution" value="3.50 A"/>
    <property type="chains" value="15/58=1-140"/>
</dbReference>
<dbReference type="PDB" id="6QNR">
    <property type="method" value="X-ray"/>
    <property type="resolution" value="3.10 A"/>
    <property type="chains" value="15/58=1-140"/>
</dbReference>
<dbReference type="PDB" id="6UCQ">
    <property type="method" value="X-ray"/>
    <property type="resolution" value="3.50 A"/>
    <property type="chains" value="1N/2N=1-140"/>
</dbReference>
<dbReference type="PDB" id="6UO1">
    <property type="method" value="X-ray"/>
    <property type="resolution" value="2.95 A"/>
    <property type="chains" value="1N/2N=1-140"/>
</dbReference>
<dbReference type="PDB" id="6XHV">
    <property type="method" value="X-ray"/>
    <property type="resolution" value="2.40 A"/>
    <property type="chains" value="1N/2N=1-140"/>
</dbReference>
<dbReference type="PDB" id="6XHW">
    <property type="method" value="X-ray"/>
    <property type="resolution" value="2.50 A"/>
    <property type="chains" value="1N/2N=1-140"/>
</dbReference>
<dbReference type="PDB" id="6XHX">
    <property type="method" value="X-ray"/>
    <property type="resolution" value="2.55 A"/>
    <property type="chains" value="1N/2N=1-140"/>
</dbReference>
<dbReference type="PDB" id="6XHY">
    <property type="method" value="X-ray"/>
    <property type="resolution" value="2.60 A"/>
    <property type="chains" value="1N/2N=1-140"/>
</dbReference>
<dbReference type="PDB" id="6XQD">
    <property type="method" value="X-ray"/>
    <property type="resolution" value="2.80 A"/>
    <property type="chains" value="1N/2N=1-140"/>
</dbReference>
<dbReference type="PDB" id="6XQE">
    <property type="method" value="X-ray"/>
    <property type="resolution" value="3.00 A"/>
    <property type="chains" value="1N/2N=1-140"/>
</dbReference>
<dbReference type="PDB" id="7AZO">
    <property type="method" value="X-ray"/>
    <property type="resolution" value="3.30 A"/>
    <property type="chains" value="L13A/L13B=1-140"/>
</dbReference>
<dbReference type="PDB" id="7AZS">
    <property type="method" value="X-ray"/>
    <property type="resolution" value="3.10 A"/>
    <property type="chains" value="L13A/L13B=1-140"/>
</dbReference>
<dbReference type="PDB" id="7JQL">
    <property type="method" value="X-ray"/>
    <property type="resolution" value="3.00 A"/>
    <property type="chains" value="1N/2N=1-140"/>
</dbReference>
<dbReference type="PDB" id="7JQM">
    <property type="method" value="X-ray"/>
    <property type="resolution" value="3.05 A"/>
    <property type="chains" value="1N/2N=1-140"/>
</dbReference>
<dbReference type="PDB" id="7LH5">
    <property type="method" value="X-ray"/>
    <property type="resolution" value="3.27 A"/>
    <property type="chains" value="BN/DN=1-140"/>
</dbReference>
<dbReference type="PDB" id="7MD7">
    <property type="method" value="X-ray"/>
    <property type="resolution" value="2.80 A"/>
    <property type="chains" value="1N/2N=1-140"/>
</dbReference>
<dbReference type="PDB" id="7RQ8">
    <property type="method" value="X-ray"/>
    <property type="resolution" value="2.50 A"/>
    <property type="chains" value="1N/2N=1-140"/>
</dbReference>
<dbReference type="PDB" id="7RQ9">
    <property type="method" value="X-ray"/>
    <property type="resolution" value="2.60 A"/>
    <property type="chains" value="1N/2N=1-140"/>
</dbReference>
<dbReference type="PDB" id="7RQA">
    <property type="method" value="X-ray"/>
    <property type="resolution" value="2.40 A"/>
    <property type="chains" value="1N/2N=1-140"/>
</dbReference>
<dbReference type="PDB" id="7RQB">
    <property type="method" value="X-ray"/>
    <property type="resolution" value="2.45 A"/>
    <property type="chains" value="1N/2N=1-140"/>
</dbReference>
<dbReference type="PDB" id="7RQC">
    <property type="method" value="X-ray"/>
    <property type="resolution" value="2.50 A"/>
    <property type="chains" value="1N/2N=1-140"/>
</dbReference>
<dbReference type="PDB" id="7RQD">
    <property type="method" value="X-ray"/>
    <property type="resolution" value="2.50 A"/>
    <property type="chains" value="1N/2N=1-140"/>
</dbReference>
<dbReference type="PDB" id="7RQE">
    <property type="method" value="X-ray"/>
    <property type="resolution" value="2.40 A"/>
    <property type="chains" value="1N/2N=1-140"/>
</dbReference>
<dbReference type="PDB" id="7U2H">
    <property type="method" value="X-ray"/>
    <property type="resolution" value="2.55 A"/>
    <property type="chains" value="1N/2N=1-140"/>
</dbReference>
<dbReference type="PDB" id="7U2I">
    <property type="method" value="X-ray"/>
    <property type="resolution" value="2.55 A"/>
    <property type="chains" value="1N/2N=1-140"/>
</dbReference>
<dbReference type="PDB" id="7U2J">
    <property type="method" value="X-ray"/>
    <property type="resolution" value="2.55 A"/>
    <property type="chains" value="1N/2N=1-140"/>
</dbReference>
<dbReference type="PDB" id="8CVJ">
    <property type="method" value="X-ray"/>
    <property type="resolution" value="2.40 A"/>
    <property type="chains" value="1N/2N=1-140"/>
</dbReference>
<dbReference type="PDB" id="8CVK">
    <property type="method" value="X-ray"/>
    <property type="resolution" value="2.50 A"/>
    <property type="chains" value="1N/2N=1-140"/>
</dbReference>
<dbReference type="PDB" id="8CVL">
    <property type="method" value="X-ray"/>
    <property type="resolution" value="2.30 A"/>
    <property type="chains" value="1N/2N=1-140"/>
</dbReference>
<dbReference type="PDB" id="8EKB">
    <property type="method" value="X-ray"/>
    <property type="resolution" value="2.70 A"/>
    <property type="chains" value="1N/2N=1-140"/>
</dbReference>
<dbReference type="PDB" id="8EV6">
    <property type="method" value="X-ray"/>
    <property type="resolution" value="2.95 A"/>
    <property type="chains" value="1N/2N=1-140"/>
</dbReference>
<dbReference type="PDB" id="8EV7">
    <property type="method" value="X-ray"/>
    <property type="resolution" value="2.89 A"/>
    <property type="chains" value="1N/2N=1-140"/>
</dbReference>
<dbReference type="PDB" id="8FC1">
    <property type="method" value="X-ray"/>
    <property type="resolution" value="2.50 A"/>
    <property type="chains" value="1N/2N=1-140"/>
</dbReference>
<dbReference type="PDB" id="8FC2">
    <property type="method" value="X-ray"/>
    <property type="resolution" value="2.50 A"/>
    <property type="chains" value="1N/2N=1-140"/>
</dbReference>
<dbReference type="PDB" id="8FC3">
    <property type="method" value="X-ray"/>
    <property type="resolution" value="2.60 A"/>
    <property type="chains" value="1N/2N=1-140"/>
</dbReference>
<dbReference type="PDB" id="8FC4">
    <property type="method" value="X-ray"/>
    <property type="resolution" value="2.45 A"/>
    <property type="chains" value="1N/2N=1-140"/>
</dbReference>
<dbReference type="PDB" id="8FC5">
    <property type="method" value="X-ray"/>
    <property type="resolution" value="2.65 A"/>
    <property type="chains" value="1N/2N=1-140"/>
</dbReference>
<dbReference type="PDB" id="8FC6">
    <property type="method" value="X-ray"/>
    <property type="resolution" value="2.35 A"/>
    <property type="chains" value="1N/2N=1-140"/>
</dbReference>
<dbReference type="PDB" id="8FOM">
    <property type="method" value="X-ray"/>
    <property type="resolution" value="3.58 A"/>
    <property type="chains" value="RN/YN=1-140"/>
</dbReference>
<dbReference type="PDB" id="8FON">
    <property type="method" value="X-ray"/>
    <property type="resolution" value="3.64 A"/>
    <property type="chains" value="RN/YN=1-140"/>
</dbReference>
<dbReference type="PDB" id="8G29">
    <property type="method" value="X-ray"/>
    <property type="resolution" value="2.55 A"/>
    <property type="chains" value="1N/2N=1-140"/>
</dbReference>
<dbReference type="PDB" id="8G2A">
    <property type="method" value="X-ray"/>
    <property type="resolution" value="2.45 A"/>
    <property type="chains" value="1N/2N=1-140"/>
</dbReference>
<dbReference type="PDB" id="8G2B">
    <property type="method" value="X-ray"/>
    <property type="resolution" value="2.55 A"/>
    <property type="chains" value="1N/2N=1-140"/>
</dbReference>
<dbReference type="PDB" id="8G2C">
    <property type="method" value="X-ray"/>
    <property type="resolution" value="2.65 A"/>
    <property type="chains" value="1N/2N=1-140"/>
</dbReference>
<dbReference type="PDB" id="8G2D">
    <property type="method" value="X-ray"/>
    <property type="resolution" value="2.70 A"/>
    <property type="chains" value="1N/2N=1-140"/>
</dbReference>
<dbReference type="PDB" id="8T8B">
    <property type="method" value="X-ray"/>
    <property type="resolution" value="2.65 A"/>
    <property type="chains" value="1N/2N=1-140"/>
</dbReference>
<dbReference type="PDB" id="8T8C">
    <property type="method" value="X-ray"/>
    <property type="resolution" value="2.60 A"/>
    <property type="chains" value="1N/2N=1-140"/>
</dbReference>
<dbReference type="PDB" id="8UD6">
    <property type="method" value="X-ray"/>
    <property type="resolution" value="2.70 A"/>
    <property type="chains" value="1N/2N=1-140"/>
</dbReference>
<dbReference type="PDB" id="8UD7">
    <property type="method" value="X-ray"/>
    <property type="resolution" value="2.55 A"/>
    <property type="chains" value="1N/2N=1-140"/>
</dbReference>
<dbReference type="PDB" id="8UD8">
    <property type="method" value="X-ray"/>
    <property type="resolution" value="2.60 A"/>
    <property type="chains" value="1N/2N=1-140"/>
</dbReference>
<dbReference type="PDB" id="8UVR">
    <property type="method" value="X-ray"/>
    <property type="resolution" value="2.60 A"/>
    <property type="chains" value="1N/2N=1-140"/>
</dbReference>
<dbReference type="PDB" id="8UVS">
    <property type="method" value="X-ray"/>
    <property type="resolution" value="2.75 A"/>
    <property type="chains" value="1N/2N=1-140"/>
</dbReference>
<dbReference type="PDB" id="8VTU">
    <property type="method" value="X-ray"/>
    <property type="resolution" value="2.40 A"/>
    <property type="chains" value="1N/2N=1-140"/>
</dbReference>
<dbReference type="PDB" id="8VTV">
    <property type="method" value="X-ray"/>
    <property type="resolution" value="2.55 A"/>
    <property type="chains" value="1N/2N=1-140"/>
</dbReference>
<dbReference type="PDB" id="8VTW">
    <property type="method" value="X-ray"/>
    <property type="resolution" value="2.35 A"/>
    <property type="chains" value="1N/2N=1-140"/>
</dbReference>
<dbReference type="PDB" id="8VTX">
    <property type="method" value="X-ray"/>
    <property type="resolution" value="2.40 A"/>
    <property type="chains" value="1N/2N=1-140"/>
</dbReference>
<dbReference type="PDB" id="8VTY">
    <property type="method" value="X-ray"/>
    <property type="resolution" value="2.60 A"/>
    <property type="chains" value="1N/2N=1-140"/>
</dbReference>
<dbReference type="PDB" id="8WV1">
    <property type="method" value="X-ray"/>
    <property type="resolution" value="3.99 A"/>
    <property type="chains" value="I/i=1-140"/>
</dbReference>
<dbReference type="PDB" id="9B00">
    <property type="method" value="X-ray"/>
    <property type="resolution" value="2.80 A"/>
    <property type="chains" value="1N/2N=1-140"/>
</dbReference>
<dbReference type="PDB" id="9D0J">
    <property type="method" value="X-ray"/>
    <property type="resolution" value="2.50 A"/>
    <property type="chains" value="1N/2N=1-140"/>
</dbReference>
<dbReference type="PDB" id="9D7R">
    <property type="method" value="X-ray"/>
    <property type="resolution" value="2.70 A"/>
    <property type="chains" value="1N/2N=1-140"/>
</dbReference>
<dbReference type="PDB" id="9D7S">
    <property type="method" value="X-ray"/>
    <property type="resolution" value="2.85 A"/>
    <property type="chains" value="1N/2N=1-140"/>
</dbReference>
<dbReference type="PDB" id="9D7T">
    <property type="method" value="X-ray"/>
    <property type="resolution" value="2.70 A"/>
    <property type="chains" value="1N/2N=1-140"/>
</dbReference>
<dbReference type="PDB" id="9DFC">
    <property type="method" value="X-ray"/>
    <property type="resolution" value="2.50 A"/>
    <property type="chains" value="1N/2N=1-140"/>
</dbReference>
<dbReference type="PDB" id="9DFD">
    <property type="method" value="X-ray"/>
    <property type="resolution" value="2.60 A"/>
    <property type="chains" value="1N/2N=1-140"/>
</dbReference>
<dbReference type="PDB" id="9DFE">
    <property type="method" value="X-ray"/>
    <property type="resolution" value="2.60 A"/>
    <property type="chains" value="1N/2N=1-140"/>
</dbReference>
<dbReference type="PDBsum" id="1VVJ"/>
<dbReference type="PDBsum" id="1VY4"/>
<dbReference type="PDBsum" id="1VY5"/>
<dbReference type="PDBsum" id="1VY6"/>
<dbReference type="PDBsum" id="1VY7"/>
<dbReference type="PDBsum" id="4L47"/>
<dbReference type="PDBsum" id="4L71"/>
<dbReference type="PDBsum" id="4LEL"/>
<dbReference type="PDBsum" id="4LFZ"/>
<dbReference type="PDBsum" id="4LNT"/>
<dbReference type="PDBsum" id="4LSK"/>
<dbReference type="PDBsum" id="4LT8"/>
<dbReference type="PDBsum" id="4P6F"/>
<dbReference type="PDBsum" id="4P70"/>
<dbReference type="PDBsum" id="4TUA"/>
<dbReference type="PDBsum" id="4TUB"/>
<dbReference type="PDBsum" id="4TUC"/>
<dbReference type="PDBsum" id="4TUD"/>
<dbReference type="PDBsum" id="4TUE"/>
<dbReference type="PDBsum" id="4V42"/>
<dbReference type="PDBsum" id="4V4P"/>
<dbReference type="PDBsum" id="4V4T"/>
<dbReference type="PDBsum" id="4V4X"/>
<dbReference type="PDBsum" id="4V4Y"/>
<dbReference type="PDBsum" id="4V4Z"/>
<dbReference type="PDBsum" id="4V51"/>
<dbReference type="PDBsum" id="4V5A"/>
<dbReference type="PDBsum" id="4V5C"/>
<dbReference type="PDBsum" id="4V5D"/>
<dbReference type="PDBsum" id="4V5E"/>
<dbReference type="PDBsum" id="4V5F"/>
<dbReference type="PDBsum" id="4V5G"/>
<dbReference type="PDBsum" id="4V5J"/>
<dbReference type="PDBsum" id="4V5K"/>
<dbReference type="PDBsum" id="4V5L"/>
<dbReference type="PDBsum" id="4V5M"/>
<dbReference type="PDBsum" id="4V5N"/>
<dbReference type="PDBsum" id="4V5P"/>
<dbReference type="PDBsum" id="4V5Q"/>
<dbReference type="PDBsum" id="4V5R"/>
<dbReference type="PDBsum" id="4V5S"/>
<dbReference type="PDBsum" id="4V68"/>
<dbReference type="PDBsum" id="4V6A"/>
<dbReference type="PDBsum" id="4V6F"/>
<dbReference type="PDBsum" id="4V6G"/>
<dbReference type="PDBsum" id="4V7J"/>
<dbReference type="PDBsum" id="4V7K"/>
<dbReference type="PDBsum" id="4V7L"/>
<dbReference type="PDBsum" id="4V7M"/>
<dbReference type="PDBsum" id="4V7W"/>
<dbReference type="PDBsum" id="4V7X"/>
<dbReference type="PDBsum" id="4V7Y"/>
<dbReference type="PDBsum" id="4V7Z"/>
<dbReference type="PDBsum" id="4V87"/>
<dbReference type="PDBsum" id="4V8A"/>
<dbReference type="PDBsum" id="4V8B"/>
<dbReference type="PDBsum" id="4V8C"/>
<dbReference type="PDBsum" id="4V8D"/>
<dbReference type="PDBsum" id="4V8E"/>
<dbReference type="PDBsum" id="4V8F"/>
<dbReference type="PDBsum" id="4V8G"/>
<dbReference type="PDBsum" id="4V8H"/>
<dbReference type="PDBsum" id="4V8I"/>
<dbReference type="PDBsum" id="4V8J"/>
<dbReference type="PDBsum" id="4V8N"/>
<dbReference type="PDBsum" id="4V8O"/>
<dbReference type="PDBsum" id="4V8Q"/>
<dbReference type="PDBsum" id="4V8U"/>
<dbReference type="PDBsum" id="4V8X"/>
<dbReference type="PDBsum" id="4V90"/>
<dbReference type="PDBsum" id="4V95"/>
<dbReference type="PDBsum" id="4V97"/>
<dbReference type="PDBsum" id="4V9A"/>
<dbReference type="PDBsum" id="4V9B"/>
<dbReference type="PDBsum" id="4V9H"/>
<dbReference type="PDBsum" id="4V9I"/>
<dbReference type="PDBsum" id="4V9R"/>
<dbReference type="PDBsum" id="4V9S"/>
<dbReference type="PDBsum" id="4W2E"/>
<dbReference type="PDBsum" id="4W2F"/>
<dbReference type="PDBsum" id="4W2G"/>
<dbReference type="PDBsum" id="4W2H"/>
<dbReference type="PDBsum" id="4W2I"/>
<dbReference type="PDBsum" id="4W4G"/>
<dbReference type="PDBsum" id="4WPO"/>
<dbReference type="PDBsum" id="4WQ1"/>
<dbReference type="PDBsum" id="4WQF"/>
<dbReference type="PDBsum" id="4WQR"/>
<dbReference type="PDBsum" id="4WQU"/>
<dbReference type="PDBsum" id="4WQY"/>
<dbReference type="PDBsum" id="4WR6"/>
<dbReference type="PDBsum" id="4WRA"/>
<dbReference type="PDBsum" id="4WRO"/>
<dbReference type="PDBsum" id="4WSD"/>
<dbReference type="PDBsum" id="4WSM"/>
<dbReference type="PDBsum" id="4WT1"/>
<dbReference type="PDBsum" id="4WT8"/>
<dbReference type="PDBsum" id="4WU1"/>
<dbReference type="PDBsum" id="4WZD"/>
<dbReference type="PDBsum" id="4WZO"/>
<dbReference type="PDBsum" id="4Y4O"/>
<dbReference type="PDBsum" id="4Y4P"/>
<dbReference type="PDBsum" id="4YPB"/>
<dbReference type="PDBsum" id="4YZV"/>
<dbReference type="PDBsum" id="4Z3S"/>
<dbReference type="PDBsum" id="4Z8C"/>
<dbReference type="PDBsum" id="4ZER"/>
<dbReference type="PDBsum" id="4ZSN"/>
<dbReference type="PDBsum" id="5A9Z"/>
<dbReference type="PDBsum" id="5AA0"/>
<dbReference type="PDBsum" id="5CZP"/>
<dbReference type="PDBsum" id="5D8B"/>
<dbReference type="PDBsum" id="5DFE"/>
<dbReference type="PDBsum" id="5DOX"/>
<dbReference type="PDBsum" id="5DOY"/>
<dbReference type="PDBsum" id="5E7K"/>
<dbReference type="PDBsum" id="5E81"/>
<dbReference type="PDBsum" id="5EL4"/>
<dbReference type="PDBsum" id="5EL5"/>
<dbReference type="PDBsum" id="5EL6"/>
<dbReference type="PDBsum" id="5EL7"/>
<dbReference type="PDBsum" id="5F8K"/>
<dbReference type="PDBsum" id="5FDU"/>
<dbReference type="PDBsum" id="5FDV"/>
<dbReference type="PDBsum" id="5HAU"/>
<dbReference type="PDBsum" id="5HCP"/>
<dbReference type="PDBsum" id="5HCQ"/>
<dbReference type="PDBsum" id="5HCR"/>
<dbReference type="PDBsum" id="5HD1"/>
<dbReference type="PDBsum" id="5IB7"/>
<dbReference type="PDBsum" id="5IB8"/>
<dbReference type="PDBsum" id="5IBB"/>
<dbReference type="PDBsum" id="5IMQ"/>
<dbReference type="PDBsum" id="5IMR"/>
<dbReference type="PDBsum" id="5J30"/>
<dbReference type="PDBsum" id="5J3C"/>
<dbReference type="PDBsum" id="5J4B"/>
<dbReference type="PDBsum" id="5J4C"/>
<dbReference type="PDBsum" id="5J8B"/>
<dbReference type="PDBsum" id="5NDJ"/>
<dbReference type="PDBsum" id="5NDK"/>
<dbReference type="PDBsum" id="5OT7"/>
<dbReference type="PDBsum" id="5UQ7"/>
<dbReference type="PDBsum" id="5UQ8"/>
<dbReference type="PDBsum" id="5VP2"/>
<dbReference type="PDBsum" id="5VPO"/>
<dbReference type="PDBsum" id="5VPP"/>
<dbReference type="PDBsum" id="5W4K"/>
<dbReference type="PDBsum" id="5WIS"/>
<dbReference type="PDBsum" id="5WIT"/>
<dbReference type="PDBsum" id="5ZLU"/>
<dbReference type="PDBsum" id="6BUW"/>
<dbReference type="PDBsum" id="6BZ6"/>
<dbReference type="PDBsum" id="6BZ7"/>
<dbReference type="PDBsum" id="6BZ8"/>
<dbReference type="PDBsum" id="6C5L"/>
<dbReference type="PDBsum" id="6CAE"/>
<dbReference type="PDBsum" id="6CFJ"/>
<dbReference type="PDBsum" id="6CFK"/>
<dbReference type="PDBsum" id="6CFL"/>
<dbReference type="PDBsum" id="6CZR"/>
<dbReference type="PDBsum" id="6FKR"/>
<dbReference type="PDBsum" id="6GSJ"/>
<dbReference type="PDBsum" id="6GSK"/>
<dbReference type="PDBsum" id="6GSL"/>
<dbReference type="PDBsum" id="6GZQ"/>
<dbReference type="PDBsum" id="6GZX"/>
<dbReference type="PDBsum" id="6GZZ"/>
<dbReference type="PDBsum" id="6N9E"/>
<dbReference type="PDBsum" id="6N9F"/>
<dbReference type="PDBsum" id="6ND5"/>
<dbReference type="PDBsum" id="6ND6"/>
<dbReference type="PDBsum" id="6NDK"/>
<dbReference type="PDBsum" id="6NSH"/>
<dbReference type="PDBsum" id="6NTA"/>
<dbReference type="PDBsum" id="6NUO"/>
<dbReference type="PDBsum" id="6NWY"/>
<dbReference type="PDBsum" id="6O3M"/>
<dbReference type="PDBsum" id="6O97"/>
<dbReference type="PDBsum" id="6OF1"/>
<dbReference type="PDBsum" id="6OF6"/>
<dbReference type="PDBsum" id="6OJ2"/>
<dbReference type="PDBsum" id="6OPE"/>
<dbReference type="PDBsum" id="6ORD"/>
<dbReference type="PDBsum" id="6OSI"/>
<dbReference type="PDBsum" id="6OTR"/>
<dbReference type="PDBsum" id="6OXA"/>
<dbReference type="PDBsum" id="6OXI"/>
<dbReference type="PDBsum" id="6Q95"/>
<dbReference type="PDBsum" id="6QNQ"/>
<dbReference type="PDBsum" id="6QNR"/>
<dbReference type="PDBsum" id="6UCQ"/>
<dbReference type="PDBsum" id="6UO1"/>
<dbReference type="PDBsum" id="6XHV"/>
<dbReference type="PDBsum" id="6XHW"/>
<dbReference type="PDBsum" id="6XHX"/>
<dbReference type="PDBsum" id="6XHY"/>
<dbReference type="PDBsum" id="6XQD"/>
<dbReference type="PDBsum" id="6XQE"/>
<dbReference type="PDBsum" id="7AZO"/>
<dbReference type="PDBsum" id="7AZS"/>
<dbReference type="PDBsum" id="7JQL"/>
<dbReference type="PDBsum" id="7JQM"/>
<dbReference type="PDBsum" id="7LH5"/>
<dbReference type="PDBsum" id="7MD7"/>
<dbReference type="PDBsum" id="7RQ8"/>
<dbReference type="PDBsum" id="7RQ9"/>
<dbReference type="PDBsum" id="7RQA"/>
<dbReference type="PDBsum" id="7RQB"/>
<dbReference type="PDBsum" id="7RQC"/>
<dbReference type="PDBsum" id="7RQD"/>
<dbReference type="PDBsum" id="7RQE"/>
<dbReference type="PDBsum" id="7U2H"/>
<dbReference type="PDBsum" id="7U2I"/>
<dbReference type="PDBsum" id="7U2J"/>
<dbReference type="PDBsum" id="8CVJ"/>
<dbReference type="PDBsum" id="8CVK"/>
<dbReference type="PDBsum" id="8CVL"/>
<dbReference type="PDBsum" id="8EKB"/>
<dbReference type="PDBsum" id="8EV6"/>
<dbReference type="PDBsum" id="8EV7"/>
<dbReference type="PDBsum" id="8FC1"/>
<dbReference type="PDBsum" id="8FC2"/>
<dbReference type="PDBsum" id="8FC3"/>
<dbReference type="PDBsum" id="8FC4"/>
<dbReference type="PDBsum" id="8FC5"/>
<dbReference type="PDBsum" id="8FC6"/>
<dbReference type="PDBsum" id="8FOM"/>
<dbReference type="PDBsum" id="8FON"/>
<dbReference type="PDBsum" id="8G29"/>
<dbReference type="PDBsum" id="8G2A"/>
<dbReference type="PDBsum" id="8G2B"/>
<dbReference type="PDBsum" id="8G2C"/>
<dbReference type="PDBsum" id="8G2D"/>
<dbReference type="PDBsum" id="8T8B"/>
<dbReference type="PDBsum" id="8T8C"/>
<dbReference type="PDBsum" id="8UD6"/>
<dbReference type="PDBsum" id="8UD7"/>
<dbReference type="PDBsum" id="8UD8"/>
<dbReference type="PDBsum" id="8UVR"/>
<dbReference type="PDBsum" id="8UVS"/>
<dbReference type="PDBsum" id="8VTU"/>
<dbReference type="PDBsum" id="8VTV"/>
<dbReference type="PDBsum" id="8VTW"/>
<dbReference type="PDBsum" id="8VTX"/>
<dbReference type="PDBsum" id="8VTY"/>
<dbReference type="PDBsum" id="8WV1"/>
<dbReference type="PDBsum" id="9B00"/>
<dbReference type="PDBsum" id="9D0J"/>
<dbReference type="PDBsum" id="9D7R"/>
<dbReference type="PDBsum" id="9D7S"/>
<dbReference type="PDBsum" id="9D7T"/>
<dbReference type="PDBsum" id="9DFC"/>
<dbReference type="PDBsum" id="9DFD"/>
<dbReference type="PDBsum" id="9DFE"/>
<dbReference type="EMDB" id="EMD-0101"/>
<dbReference type="EMDB" id="EMD-0104"/>
<dbReference type="EMDB" id="EMD-0105"/>
<dbReference type="EMDB" id="EMD-3852"/>
<dbReference type="EMDB" id="EMD-4475"/>
<dbReference type="EMDB" id="EMD-6934"/>
<dbReference type="EMDB" id="EMD-8596"/>
<dbReference type="EMDB" id="EMD-8597"/>
<dbReference type="SMR" id="P60488"/>
<dbReference type="IntAct" id="P60488">
    <property type="interactions" value="60"/>
</dbReference>
<dbReference type="EnsemblBacteria" id="BAD71288">
    <property type="protein sequence ID" value="BAD71288"/>
    <property type="gene ID" value="BAD71288"/>
</dbReference>
<dbReference type="GeneID" id="3168485"/>
<dbReference type="KEGG" id="ttj:TTHA1465"/>
<dbReference type="PATRIC" id="fig|300852.9.peg.1439"/>
<dbReference type="eggNOG" id="COG0102">
    <property type="taxonomic scope" value="Bacteria"/>
</dbReference>
<dbReference type="HOGENOM" id="CLU_082184_2_2_0"/>
<dbReference type="PhylomeDB" id="P60488"/>
<dbReference type="Proteomes" id="UP000000532">
    <property type="component" value="Chromosome"/>
</dbReference>
<dbReference type="GO" id="GO:0022625">
    <property type="term" value="C:cytosolic large ribosomal subunit"/>
    <property type="evidence" value="ECO:0007669"/>
    <property type="project" value="TreeGrafter"/>
</dbReference>
<dbReference type="GO" id="GO:0003729">
    <property type="term" value="F:mRNA binding"/>
    <property type="evidence" value="ECO:0007669"/>
    <property type="project" value="TreeGrafter"/>
</dbReference>
<dbReference type="GO" id="GO:0003735">
    <property type="term" value="F:structural constituent of ribosome"/>
    <property type="evidence" value="ECO:0007669"/>
    <property type="project" value="InterPro"/>
</dbReference>
<dbReference type="GO" id="GO:0017148">
    <property type="term" value="P:negative regulation of translation"/>
    <property type="evidence" value="ECO:0007669"/>
    <property type="project" value="TreeGrafter"/>
</dbReference>
<dbReference type="GO" id="GO:0006412">
    <property type="term" value="P:translation"/>
    <property type="evidence" value="ECO:0007669"/>
    <property type="project" value="UniProtKB-UniRule"/>
</dbReference>
<dbReference type="CDD" id="cd00392">
    <property type="entry name" value="Ribosomal_L13"/>
    <property type="match status" value="1"/>
</dbReference>
<dbReference type="FunFam" id="3.90.1180.10:FF:000001">
    <property type="entry name" value="50S ribosomal protein L13"/>
    <property type="match status" value="1"/>
</dbReference>
<dbReference type="Gene3D" id="3.90.1180.10">
    <property type="entry name" value="Ribosomal protein L13"/>
    <property type="match status" value="1"/>
</dbReference>
<dbReference type="HAMAP" id="MF_01366">
    <property type="entry name" value="Ribosomal_uL13"/>
    <property type="match status" value="1"/>
</dbReference>
<dbReference type="InterPro" id="IPR005822">
    <property type="entry name" value="Ribosomal_uL13"/>
</dbReference>
<dbReference type="InterPro" id="IPR005823">
    <property type="entry name" value="Ribosomal_uL13_bac-type"/>
</dbReference>
<dbReference type="InterPro" id="IPR023563">
    <property type="entry name" value="Ribosomal_uL13_CS"/>
</dbReference>
<dbReference type="InterPro" id="IPR036899">
    <property type="entry name" value="Ribosomal_uL13_sf"/>
</dbReference>
<dbReference type="NCBIfam" id="TIGR01066">
    <property type="entry name" value="rplM_bact"/>
    <property type="match status" value="1"/>
</dbReference>
<dbReference type="PANTHER" id="PTHR11545:SF2">
    <property type="entry name" value="LARGE RIBOSOMAL SUBUNIT PROTEIN UL13M"/>
    <property type="match status" value="1"/>
</dbReference>
<dbReference type="PANTHER" id="PTHR11545">
    <property type="entry name" value="RIBOSOMAL PROTEIN L13"/>
    <property type="match status" value="1"/>
</dbReference>
<dbReference type="Pfam" id="PF00572">
    <property type="entry name" value="Ribosomal_L13"/>
    <property type="match status" value="1"/>
</dbReference>
<dbReference type="PIRSF" id="PIRSF002181">
    <property type="entry name" value="Ribosomal_L13"/>
    <property type="match status" value="1"/>
</dbReference>
<dbReference type="SUPFAM" id="SSF52161">
    <property type="entry name" value="Ribosomal protein L13"/>
    <property type="match status" value="1"/>
</dbReference>
<dbReference type="PROSITE" id="PS00783">
    <property type="entry name" value="RIBOSOMAL_L13"/>
    <property type="match status" value="1"/>
</dbReference>
<reference key="1">
    <citation type="submission" date="2004-11" db="EMBL/GenBank/DDBJ databases">
        <title>Complete genome sequence of Thermus thermophilus HB8.</title>
        <authorList>
            <person name="Masui R."/>
            <person name="Kurokawa K."/>
            <person name="Nakagawa N."/>
            <person name="Tokunaga F."/>
            <person name="Koyama Y."/>
            <person name="Shibata T."/>
            <person name="Oshima T."/>
            <person name="Yokoyama S."/>
            <person name="Yasunaga T."/>
            <person name="Kuramitsu S."/>
        </authorList>
    </citation>
    <scope>NUCLEOTIDE SEQUENCE [LARGE SCALE GENOMIC DNA]</scope>
    <source>
        <strain>ATCC 27634 / DSM 579 / HB8</strain>
    </source>
</reference>
<reference key="2">
    <citation type="journal article" date="2000" name="Biol. Chem.">
        <title>Identification of the 50S ribosomal proteins from the eubacterium Thermus thermophilus.</title>
        <authorList>
            <person name="Katsani K.R."/>
            <person name="Tsiboli P."/>
            <person name="Anagnostopoulos K."/>
            <person name="Urlaub H."/>
            <person name="Choli-Papadopoulou T."/>
        </authorList>
    </citation>
    <scope>PROTEIN SEQUENCE OF 1-39</scope>
    <source>
        <strain>ATCC 27634 / DSM 579 / HB8</strain>
    </source>
</reference>
<reference key="3">
    <citation type="journal article" date="2005" name="Proteomics">
        <title>Extending ribosomal protein identifications to unsequenced bacterial strains using matrix-assisted laser desorption/ionization mass spectrometry.</title>
        <authorList>
            <person name="Suh M.-J."/>
            <person name="Hamburg D.M."/>
            <person name="Gregory S.T."/>
            <person name="Dahlberg A.E."/>
            <person name="Limbach P.A."/>
        </authorList>
    </citation>
    <scope>MASS SPECTROMETRY</scope>
    <source>
        <strain>ATCC 27634 / DSM 579 / HB8</strain>
    </source>
</reference>
<reference key="4">
    <citation type="journal article" date="2001" name="Cell">
        <title>The path of messenger RNA through the ribosome.</title>
        <authorList>
            <person name="Yusupova G.Z."/>
            <person name="Yusupov M.M."/>
            <person name="Cate J.H.D."/>
            <person name="Noller H.F."/>
        </authorList>
    </citation>
    <scope>X-RAY CRYSTALLOGRAPHY (5.0 ANGSTROMS) OF THE RIBOSOME</scope>
</reference>
<reference key="5">
    <citation type="journal article" date="2001" name="Science">
        <title>Crystal structure of the ribosome at 5.5 A resolution.</title>
        <authorList>
            <person name="Yusupov M.M."/>
            <person name="Yusupova G.Z."/>
            <person name="Baucom A."/>
            <person name="Lieberman K."/>
            <person name="Earnest T.N."/>
            <person name="Cate J.H.D."/>
            <person name="Noller H.F."/>
        </authorList>
    </citation>
    <scope>X-RAY CRYSTALLOGRAPHY (5.5 ANGSTROMS) OF THE RIBOSOME</scope>
</reference>
<reference key="6">
    <citation type="journal article" date="2005" name="Cell">
        <title>Crystal structures of the ribosome in complex with release factors RF1 and RF2 bound to a cognate stop codon.</title>
        <authorList>
            <person name="Petry S."/>
            <person name="Brodersen D.E."/>
            <person name="Murphy F.V."/>
            <person name="Dunham C.M."/>
            <person name="Selmer M."/>
            <person name="Tarry M.J."/>
            <person name="Kelley A.C."/>
            <person name="Ramakrishnan V."/>
        </authorList>
    </citation>
    <scope>X-RAY CRYSTALLOGRAPHY (6.46 ANGSTROMS) OF 70S RIBOSOME</scope>
    <scope>SUBUNIT</scope>
</reference>
<reference key="7">
    <citation type="journal article" date="2008" name="Science">
        <title>Insights into translational termination from the structure of RF2 bound to the ribosome.</title>
        <authorList>
            <person name="Weixlbaumer A."/>
            <person name="Jin H."/>
            <person name="Neubauer C."/>
            <person name="Voorhees R.M."/>
            <person name="Petry S."/>
            <person name="Kelley A.C."/>
            <person name="Ramakrishnan V."/>
        </authorList>
    </citation>
    <scope>X-RAY CRYSTALLOGRAPHY (3.45 ANGSTROMS) OF 70S RIBOSOME IN COMPLEX WITH RF2</scope>
    <scope>SUBUNIT</scope>
</reference>
<reference key="8">
    <citation type="journal article" date="2010" name="Proc. Natl. Acad. Sci. U.S.A.">
        <title>Structure of the 70S ribosome bound to release factor 2 and a substrate analog provides insights into catalysis of peptide release.</title>
        <authorList>
            <person name="Jin H."/>
            <person name="Kelley A.C."/>
            <person name="Loakes D."/>
            <person name="Ramakrishnan V."/>
        </authorList>
    </citation>
    <scope>X-RAY CRYSTALLOGRAPHY (3.10 ANGSTROMS) OF 70S RIBOSOME IN COMPLEX WITH RF2</scope>
    <scope>SUBUNIT</scope>
</reference>
<name>RL13_THET8</name>
<accession>P60488</accession>
<accession>Q5SIA9</accession>
<organism>
    <name type="scientific">Thermus thermophilus (strain ATCC 27634 / DSM 579 / HB8)</name>
    <dbReference type="NCBI Taxonomy" id="300852"/>
    <lineage>
        <taxon>Bacteria</taxon>
        <taxon>Thermotogati</taxon>
        <taxon>Deinococcota</taxon>
        <taxon>Deinococci</taxon>
        <taxon>Thermales</taxon>
        <taxon>Thermaceae</taxon>
        <taxon>Thermus</taxon>
    </lineage>
</organism>
<comment type="function">
    <text evidence="1">This protein is one of the early assembly proteins of the 50S ribosomal subunit, although it is not seen to bind rRNA by itself. It is important during the early stages of 50S assembly.</text>
</comment>
<comment type="subunit">
    <text>Part of the 50S ribosomal subunit.</text>
</comment>
<comment type="mass spectrometry"/>
<comment type="similarity">
    <text evidence="1">Belongs to the universal ribosomal protein uL13 family.</text>
</comment>
<proteinExistence type="evidence at protein level"/>
<keyword id="KW-0002">3D-structure</keyword>
<keyword id="KW-0903">Direct protein sequencing</keyword>
<keyword id="KW-1185">Reference proteome</keyword>
<keyword id="KW-0687">Ribonucleoprotein</keyword>
<keyword id="KW-0689">Ribosomal protein</keyword>
<gene>
    <name evidence="1" type="primary">rplM</name>
    <name type="ordered locus">TTHA1465</name>
</gene>
<feature type="chain" id="PRO_0000133754" description="Large ribosomal subunit protein uL13">
    <location>
        <begin position="1"/>
        <end position="140"/>
    </location>
</feature>
<feature type="sequence conflict" description="In Ref. 2; AA sequence." evidence="3" ref="2">
    <original>A</original>
    <variation>H</variation>
    <location>
        <position position="27"/>
    </location>
</feature>
<feature type="strand" evidence="4">
    <location>
        <begin position="13"/>
        <end position="16"/>
    </location>
</feature>
<feature type="turn" evidence="4">
    <location>
        <begin position="23"/>
        <end position="26"/>
    </location>
</feature>
<feature type="helix" evidence="4">
    <location>
        <begin position="27"/>
        <end position="34"/>
    </location>
</feature>
<feature type="turn" evidence="4">
    <location>
        <begin position="44"/>
        <end position="46"/>
    </location>
</feature>
<feature type="strand" evidence="4">
    <location>
        <begin position="51"/>
        <end position="54"/>
    </location>
</feature>
<feature type="strand" evidence="4">
    <location>
        <begin position="63"/>
        <end position="65"/>
    </location>
</feature>
<feature type="strand" evidence="4">
    <location>
        <begin position="67"/>
        <end position="75"/>
    </location>
</feature>
<feature type="strand" evidence="4">
    <location>
        <begin position="82"/>
        <end position="86"/>
    </location>
</feature>
<feature type="helix" evidence="4">
    <location>
        <begin position="87"/>
        <end position="92"/>
    </location>
</feature>
<feature type="helix" evidence="4">
    <location>
        <begin position="95"/>
        <end position="104"/>
    </location>
</feature>
<feature type="helix" evidence="4">
    <location>
        <begin position="111"/>
        <end position="118"/>
    </location>
</feature>
<feature type="strand" evidence="4">
    <location>
        <begin position="120"/>
        <end position="122"/>
    </location>
</feature>
<feature type="strand" evidence="4">
    <location>
        <begin position="124"/>
        <end position="126"/>
    </location>
</feature>
<evidence type="ECO:0000255" key="1">
    <source>
        <dbReference type="HAMAP-Rule" id="MF_01366"/>
    </source>
</evidence>
<evidence type="ECO:0000269" key="2">
    <source>
    </source>
</evidence>
<evidence type="ECO:0000305" key="3"/>
<evidence type="ECO:0007829" key="4">
    <source>
        <dbReference type="PDB" id="4WT8"/>
    </source>
</evidence>